<protein>
    <recommendedName>
        <fullName evidence="1">Transcriptional regulator SlyA</fullName>
    </recommendedName>
</protein>
<feature type="chain" id="PRO_1000188011" description="Transcriptional regulator SlyA">
    <location>
        <begin position="1"/>
        <end position="144"/>
    </location>
</feature>
<feature type="domain" description="HTH marR-type" evidence="1">
    <location>
        <begin position="2"/>
        <end position="135"/>
    </location>
</feature>
<feature type="DNA-binding region" description="H-T-H motif" evidence="1">
    <location>
        <begin position="49"/>
        <end position="72"/>
    </location>
</feature>
<sequence length="144" mass="16353">MESPLGSDLARLVRIWRALIDHRLKPLELTQTHWVTLHNIHQLPPDQSQIQLAKAIGIEQPSLVRTLDQLEEKGLISRQTCASDRRAKRIKLTEKAEPLISEMEAVINKTRAEILHGISAEELEQLITLIAKLEHNIIELQAKG</sequence>
<evidence type="ECO:0000255" key="1">
    <source>
        <dbReference type="HAMAP-Rule" id="MF_01819"/>
    </source>
</evidence>
<dbReference type="EMBL" id="CU928160">
    <property type="protein sequence ID" value="CAQ98551.1"/>
    <property type="molecule type" value="Genomic_DNA"/>
</dbReference>
<dbReference type="RefSeq" id="WP_001296943.1">
    <property type="nucleotide sequence ID" value="NC_011741.1"/>
</dbReference>
<dbReference type="SMR" id="B7M0J9"/>
<dbReference type="GeneID" id="93775796"/>
<dbReference type="KEGG" id="ecr:ECIAI1_1694"/>
<dbReference type="HOGENOM" id="CLU_083287_18_2_6"/>
<dbReference type="GO" id="GO:0003677">
    <property type="term" value="F:DNA binding"/>
    <property type="evidence" value="ECO:0007669"/>
    <property type="project" value="UniProtKB-UniRule"/>
</dbReference>
<dbReference type="GO" id="GO:0003700">
    <property type="term" value="F:DNA-binding transcription factor activity"/>
    <property type="evidence" value="ECO:0007669"/>
    <property type="project" value="UniProtKB-UniRule"/>
</dbReference>
<dbReference type="GO" id="GO:0006950">
    <property type="term" value="P:response to stress"/>
    <property type="evidence" value="ECO:0007669"/>
    <property type="project" value="TreeGrafter"/>
</dbReference>
<dbReference type="FunFam" id="1.10.10.10:FF:000261">
    <property type="entry name" value="Transcriptional regulator SlyA"/>
    <property type="match status" value="1"/>
</dbReference>
<dbReference type="Gene3D" id="1.10.10.10">
    <property type="entry name" value="Winged helix-like DNA-binding domain superfamily/Winged helix DNA-binding domain"/>
    <property type="match status" value="1"/>
</dbReference>
<dbReference type="HAMAP" id="MF_01819">
    <property type="entry name" value="HTH_type_SlyA"/>
    <property type="match status" value="1"/>
</dbReference>
<dbReference type="InterPro" id="IPR000835">
    <property type="entry name" value="HTH_MarR-typ"/>
</dbReference>
<dbReference type="InterPro" id="IPR039422">
    <property type="entry name" value="MarR/SlyA-like"/>
</dbReference>
<dbReference type="InterPro" id="IPR023187">
    <property type="entry name" value="Tscrpt_reg_MarR-type_CS"/>
</dbReference>
<dbReference type="InterPro" id="IPR023071">
    <property type="entry name" value="Tscrpt_reg_SlyA"/>
</dbReference>
<dbReference type="InterPro" id="IPR036388">
    <property type="entry name" value="WH-like_DNA-bd_sf"/>
</dbReference>
<dbReference type="InterPro" id="IPR036390">
    <property type="entry name" value="WH_DNA-bd_sf"/>
</dbReference>
<dbReference type="NCBIfam" id="NF002926">
    <property type="entry name" value="PRK03573.1"/>
    <property type="match status" value="1"/>
</dbReference>
<dbReference type="PANTHER" id="PTHR33164:SF64">
    <property type="entry name" value="TRANSCRIPTIONAL REGULATOR SLYA"/>
    <property type="match status" value="1"/>
</dbReference>
<dbReference type="PANTHER" id="PTHR33164">
    <property type="entry name" value="TRANSCRIPTIONAL REGULATOR, MARR FAMILY"/>
    <property type="match status" value="1"/>
</dbReference>
<dbReference type="Pfam" id="PF01047">
    <property type="entry name" value="MarR"/>
    <property type="match status" value="1"/>
</dbReference>
<dbReference type="PRINTS" id="PR00598">
    <property type="entry name" value="HTHMARR"/>
</dbReference>
<dbReference type="SMART" id="SM00347">
    <property type="entry name" value="HTH_MARR"/>
    <property type="match status" value="1"/>
</dbReference>
<dbReference type="SUPFAM" id="SSF46785">
    <property type="entry name" value="Winged helix' DNA-binding domain"/>
    <property type="match status" value="1"/>
</dbReference>
<dbReference type="PROSITE" id="PS01117">
    <property type="entry name" value="HTH_MARR_1"/>
    <property type="match status" value="1"/>
</dbReference>
<dbReference type="PROSITE" id="PS50995">
    <property type="entry name" value="HTH_MARR_2"/>
    <property type="match status" value="1"/>
</dbReference>
<organism>
    <name type="scientific">Escherichia coli O8 (strain IAI1)</name>
    <dbReference type="NCBI Taxonomy" id="585034"/>
    <lineage>
        <taxon>Bacteria</taxon>
        <taxon>Pseudomonadati</taxon>
        <taxon>Pseudomonadota</taxon>
        <taxon>Gammaproteobacteria</taxon>
        <taxon>Enterobacterales</taxon>
        <taxon>Enterobacteriaceae</taxon>
        <taxon>Escherichia</taxon>
    </lineage>
</organism>
<comment type="function">
    <text evidence="1">Transcription regulator that can specifically activate or repress expression of target genes.</text>
</comment>
<comment type="subunit">
    <text evidence="1">Homodimer.</text>
</comment>
<comment type="similarity">
    <text evidence="1">Belongs to the SlyA family.</text>
</comment>
<keyword id="KW-0010">Activator</keyword>
<keyword id="KW-0238">DNA-binding</keyword>
<keyword id="KW-0678">Repressor</keyword>
<keyword id="KW-0804">Transcription</keyword>
<keyword id="KW-0805">Transcription regulation</keyword>
<proteinExistence type="inferred from homology"/>
<accession>B7M0J9</accession>
<reference key="1">
    <citation type="journal article" date="2009" name="PLoS Genet.">
        <title>Organised genome dynamics in the Escherichia coli species results in highly diverse adaptive paths.</title>
        <authorList>
            <person name="Touchon M."/>
            <person name="Hoede C."/>
            <person name="Tenaillon O."/>
            <person name="Barbe V."/>
            <person name="Baeriswyl S."/>
            <person name="Bidet P."/>
            <person name="Bingen E."/>
            <person name="Bonacorsi S."/>
            <person name="Bouchier C."/>
            <person name="Bouvet O."/>
            <person name="Calteau A."/>
            <person name="Chiapello H."/>
            <person name="Clermont O."/>
            <person name="Cruveiller S."/>
            <person name="Danchin A."/>
            <person name="Diard M."/>
            <person name="Dossat C."/>
            <person name="Karoui M.E."/>
            <person name="Frapy E."/>
            <person name="Garry L."/>
            <person name="Ghigo J.M."/>
            <person name="Gilles A.M."/>
            <person name="Johnson J."/>
            <person name="Le Bouguenec C."/>
            <person name="Lescat M."/>
            <person name="Mangenot S."/>
            <person name="Martinez-Jehanne V."/>
            <person name="Matic I."/>
            <person name="Nassif X."/>
            <person name="Oztas S."/>
            <person name="Petit M.A."/>
            <person name="Pichon C."/>
            <person name="Rouy Z."/>
            <person name="Ruf C.S."/>
            <person name="Schneider D."/>
            <person name="Tourret J."/>
            <person name="Vacherie B."/>
            <person name="Vallenet D."/>
            <person name="Medigue C."/>
            <person name="Rocha E.P.C."/>
            <person name="Denamur E."/>
        </authorList>
    </citation>
    <scope>NUCLEOTIDE SEQUENCE [LARGE SCALE GENOMIC DNA]</scope>
    <source>
        <strain>IAI1</strain>
    </source>
</reference>
<gene>
    <name evidence="1" type="primary">slyA</name>
    <name type="ordered locus">ECIAI1_1694</name>
</gene>
<name>SLYA_ECO8A</name>